<accession>C3L5S5</accession>
<dbReference type="EMBL" id="CP001215">
    <property type="protein sequence ID" value="ACP13189.1"/>
    <property type="molecule type" value="Genomic_DNA"/>
</dbReference>
<dbReference type="RefSeq" id="WP_001274011.1">
    <property type="nucleotide sequence ID" value="NC_012581.1"/>
</dbReference>
<dbReference type="SMR" id="C3L5S5"/>
<dbReference type="GeneID" id="93006778"/>
<dbReference type="KEGG" id="bah:BAMEG_4584"/>
<dbReference type="HOGENOM" id="CLU_160655_1_0_9"/>
<dbReference type="GO" id="GO:0005829">
    <property type="term" value="C:cytosol"/>
    <property type="evidence" value="ECO:0007669"/>
    <property type="project" value="TreeGrafter"/>
</dbReference>
<dbReference type="GO" id="GO:0015935">
    <property type="term" value="C:small ribosomal subunit"/>
    <property type="evidence" value="ECO:0007669"/>
    <property type="project" value="TreeGrafter"/>
</dbReference>
<dbReference type="GO" id="GO:0070181">
    <property type="term" value="F:small ribosomal subunit rRNA binding"/>
    <property type="evidence" value="ECO:0007669"/>
    <property type="project" value="TreeGrafter"/>
</dbReference>
<dbReference type="GO" id="GO:0003735">
    <property type="term" value="F:structural constituent of ribosome"/>
    <property type="evidence" value="ECO:0007669"/>
    <property type="project" value="InterPro"/>
</dbReference>
<dbReference type="GO" id="GO:0006412">
    <property type="term" value="P:translation"/>
    <property type="evidence" value="ECO:0007669"/>
    <property type="project" value="UniProtKB-UniRule"/>
</dbReference>
<dbReference type="FunFam" id="1.20.58.110:FF:000001">
    <property type="entry name" value="30S ribosomal protein S20"/>
    <property type="match status" value="1"/>
</dbReference>
<dbReference type="Gene3D" id="1.20.58.110">
    <property type="entry name" value="Ribosomal protein S20"/>
    <property type="match status" value="1"/>
</dbReference>
<dbReference type="HAMAP" id="MF_00500">
    <property type="entry name" value="Ribosomal_bS20"/>
    <property type="match status" value="1"/>
</dbReference>
<dbReference type="InterPro" id="IPR002583">
    <property type="entry name" value="Ribosomal_bS20"/>
</dbReference>
<dbReference type="InterPro" id="IPR036510">
    <property type="entry name" value="Ribosomal_bS20_sf"/>
</dbReference>
<dbReference type="NCBIfam" id="TIGR00029">
    <property type="entry name" value="S20"/>
    <property type="match status" value="1"/>
</dbReference>
<dbReference type="PANTHER" id="PTHR33398">
    <property type="entry name" value="30S RIBOSOMAL PROTEIN S20"/>
    <property type="match status" value="1"/>
</dbReference>
<dbReference type="PANTHER" id="PTHR33398:SF1">
    <property type="entry name" value="SMALL RIBOSOMAL SUBUNIT PROTEIN BS20C"/>
    <property type="match status" value="1"/>
</dbReference>
<dbReference type="Pfam" id="PF01649">
    <property type="entry name" value="Ribosomal_S20p"/>
    <property type="match status" value="1"/>
</dbReference>
<dbReference type="SUPFAM" id="SSF46992">
    <property type="entry name" value="Ribosomal protein S20"/>
    <property type="match status" value="1"/>
</dbReference>
<name>RS20_BACAC</name>
<comment type="function">
    <text evidence="1">Binds directly to 16S ribosomal RNA.</text>
</comment>
<comment type="similarity">
    <text evidence="1">Belongs to the bacterial ribosomal protein bS20 family.</text>
</comment>
<keyword id="KW-0687">Ribonucleoprotein</keyword>
<keyword id="KW-0689">Ribosomal protein</keyword>
<keyword id="KW-0694">RNA-binding</keyword>
<keyword id="KW-0699">rRNA-binding</keyword>
<gene>
    <name evidence="1" type="primary">rpsT</name>
    <name type="ordered locus">BAMEG_4584</name>
</gene>
<proteinExistence type="inferred from homology"/>
<protein>
    <recommendedName>
        <fullName evidence="1">Small ribosomal subunit protein bS20</fullName>
    </recommendedName>
    <alternativeName>
        <fullName evidence="3">30S ribosomal protein S20</fullName>
    </alternativeName>
</protein>
<organism>
    <name type="scientific">Bacillus anthracis (strain CDC 684 / NRRL 3495)</name>
    <dbReference type="NCBI Taxonomy" id="568206"/>
    <lineage>
        <taxon>Bacteria</taxon>
        <taxon>Bacillati</taxon>
        <taxon>Bacillota</taxon>
        <taxon>Bacilli</taxon>
        <taxon>Bacillales</taxon>
        <taxon>Bacillaceae</taxon>
        <taxon>Bacillus</taxon>
        <taxon>Bacillus cereus group</taxon>
    </lineage>
</organism>
<sequence>MANIKSAIKRAKLSEERRAHNASIKSDMRSAVKTVEALVTNNDLENAKEAFKTASKKLDKAARKGLIHQNAAARQKSRLAKQVNA</sequence>
<reference key="1">
    <citation type="submission" date="2008-10" db="EMBL/GenBank/DDBJ databases">
        <title>Genome sequence of Bacillus anthracis str. CDC 684.</title>
        <authorList>
            <person name="Dodson R.J."/>
            <person name="Munk A.C."/>
            <person name="Brettin T."/>
            <person name="Bruce D."/>
            <person name="Detter C."/>
            <person name="Tapia R."/>
            <person name="Han C."/>
            <person name="Sutton G."/>
            <person name="Sims D."/>
        </authorList>
    </citation>
    <scope>NUCLEOTIDE SEQUENCE [LARGE SCALE GENOMIC DNA]</scope>
    <source>
        <strain>CDC 684 / NRRL 3495</strain>
    </source>
</reference>
<feature type="chain" id="PRO_1000135771" description="Small ribosomal subunit protein bS20">
    <location>
        <begin position="1"/>
        <end position="85"/>
    </location>
</feature>
<feature type="region of interest" description="Disordered" evidence="2">
    <location>
        <begin position="1"/>
        <end position="25"/>
    </location>
</feature>
<evidence type="ECO:0000255" key="1">
    <source>
        <dbReference type="HAMAP-Rule" id="MF_00500"/>
    </source>
</evidence>
<evidence type="ECO:0000256" key="2">
    <source>
        <dbReference type="SAM" id="MobiDB-lite"/>
    </source>
</evidence>
<evidence type="ECO:0000305" key="3"/>